<evidence type="ECO:0000255" key="1">
    <source>
        <dbReference type="HAMAP-Rule" id="MF_00374"/>
    </source>
</evidence>
<evidence type="ECO:0000305" key="2"/>
<accession>Q1CRU9</accession>
<gene>
    <name evidence="1" type="primary">rpmC</name>
    <name type="ordered locus">HPAG1_1256</name>
</gene>
<name>RL29_HELPH</name>
<proteinExistence type="inferred from homology"/>
<sequence length="66" mass="7683">MKYTELKDKSIKELEELLHAKKAELFELRVKLKAMQLSNPNEIKKARRNIARINTAINAHYSSSVE</sequence>
<feature type="chain" id="PRO_1000007497" description="Large ribosomal subunit protein uL29">
    <location>
        <begin position="1"/>
        <end position="66"/>
    </location>
</feature>
<comment type="similarity">
    <text evidence="1">Belongs to the universal ribosomal protein uL29 family.</text>
</comment>
<reference key="1">
    <citation type="journal article" date="2006" name="Proc. Natl. Acad. Sci. U.S.A.">
        <title>The complete genome sequence of a chronic atrophic gastritis Helicobacter pylori strain: evolution during disease progression.</title>
        <authorList>
            <person name="Oh J.D."/>
            <person name="Kling-Baeckhed H."/>
            <person name="Giannakis M."/>
            <person name="Xu J."/>
            <person name="Fulton R.S."/>
            <person name="Fulton L.A."/>
            <person name="Cordum H.S."/>
            <person name="Wang C."/>
            <person name="Elliott G."/>
            <person name="Edwards J."/>
            <person name="Mardis E.R."/>
            <person name="Engstrand L.G."/>
            <person name="Gordon J.I."/>
        </authorList>
    </citation>
    <scope>NUCLEOTIDE SEQUENCE [LARGE SCALE GENOMIC DNA]</scope>
    <source>
        <strain>HPAG1</strain>
    </source>
</reference>
<dbReference type="EMBL" id="CP000241">
    <property type="protein sequence ID" value="ABF85323.1"/>
    <property type="molecule type" value="Genomic_DNA"/>
</dbReference>
<dbReference type="RefSeq" id="WP_000877884.1">
    <property type="nucleotide sequence ID" value="NC_008086.1"/>
</dbReference>
<dbReference type="SMR" id="Q1CRU9"/>
<dbReference type="KEGG" id="hpa:HPAG1_1256"/>
<dbReference type="HOGENOM" id="CLU_158491_7_1_7"/>
<dbReference type="GO" id="GO:0022625">
    <property type="term" value="C:cytosolic large ribosomal subunit"/>
    <property type="evidence" value="ECO:0007669"/>
    <property type="project" value="TreeGrafter"/>
</dbReference>
<dbReference type="GO" id="GO:0003735">
    <property type="term" value="F:structural constituent of ribosome"/>
    <property type="evidence" value="ECO:0007669"/>
    <property type="project" value="InterPro"/>
</dbReference>
<dbReference type="GO" id="GO:0006412">
    <property type="term" value="P:translation"/>
    <property type="evidence" value="ECO:0007669"/>
    <property type="project" value="UniProtKB-UniRule"/>
</dbReference>
<dbReference type="CDD" id="cd00427">
    <property type="entry name" value="Ribosomal_L29_HIP"/>
    <property type="match status" value="1"/>
</dbReference>
<dbReference type="Gene3D" id="1.10.287.310">
    <property type="match status" value="1"/>
</dbReference>
<dbReference type="HAMAP" id="MF_00374">
    <property type="entry name" value="Ribosomal_uL29"/>
    <property type="match status" value="1"/>
</dbReference>
<dbReference type="InterPro" id="IPR050063">
    <property type="entry name" value="Ribosomal_protein_uL29"/>
</dbReference>
<dbReference type="InterPro" id="IPR001854">
    <property type="entry name" value="Ribosomal_uL29"/>
</dbReference>
<dbReference type="InterPro" id="IPR018254">
    <property type="entry name" value="Ribosomal_uL29_CS"/>
</dbReference>
<dbReference type="InterPro" id="IPR036049">
    <property type="entry name" value="Ribosomal_uL29_sf"/>
</dbReference>
<dbReference type="NCBIfam" id="TIGR00012">
    <property type="entry name" value="L29"/>
    <property type="match status" value="1"/>
</dbReference>
<dbReference type="PANTHER" id="PTHR10916">
    <property type="entry name" value="60S RIBOSOMAL PROTEIN L35/50S RIBOSOMAL PROTEIN L29"/>
    <property type="match status" value="1"/>
</dbReference>
<dbReference type="PANTHER" id="PTHR10916:SF0">
    <property type="entry name" value="LARGE RIBOSOMAL SUBUNIT PROTEIN UL29C"/>
    <property type="match status" value="1"/>
</dbReference>
<dbReference type="Pfam" id="PF00831">
    <property type="entry name" value="Ribosomal_L29"/>
    <property type="match status" value="1"/>
</dbReference>
<dbReference type="SUPFAM" id="SSF46561">
    <property type="entry name" value="Ribosomal protein L29 (L29p)"/>
    <property type="match status" value="1"/>
</dbReference>
<dbReference type="PROSITE" id="PS00579">
    <property type="entry name" value="RIBOSOMAL_L29"/>
    <property type="match status" value="1"/>
</dbReference>
<keyword id="KW-0687">Ribonucleoprotein</keyword>
<keyword id="KW-0689">Ribosomal protein</keyword>
<protein>
    <recommendedName>
        <fullName evidence="1">Large ribosomal subunit protein uL29</fullName>
    </recommendedName>
    <alternativeName>
        <fullName evidence="2">50S ribosomal protein L29</fullName>
    </alternativeName>
</protein>
<organism>
    <name type="scientific">Helicobacter pylori (strain HPAG1)</name>
    <dbReference type="NCBI Taxonomy" id="357544"/>
    <lineage>
        <taxon>Bacteria</taxon>
        <taxon>Pseudomonadati</taxon>
        <taxon>Campylobacterota</taxon>
        <taxon>Epsilonproteobacteria</taxon>
        <taxon>Campylobacterales</taxon>
        <taxon>Helicobacteraceae</taxon>
        <taxon>Helicobacter</taxon>
    </lineage>
</organism>